<gene>
    <name evidence="1" type="primary">cobS</name>
    <name type="ordered locus">ECSE_2276</name>
</gene>
<name>COBS_ECOSE</name>
<keyword id="KW-0997">Cell inner membrane</keyword>
<keyword id="KW-1003">Cell membrane</keyword>
<keyword id="KW-0169">Cobalamin biosynthesis</keyword>
<keyword id="KW-0460">Magnesium</keyword>
<keyword id="KW-0472">Membrane</keyword>
<keyword id="KW-0808">Transferase</keyword>
<keyword id="KW-0812">Transmembrane</keyword>
<keyword id="KW-1133">Transmembrane helix</keyword>
<comment type="function">
    <text evidence="1">Joins adenosylcobinamide-GDP and alpha-ribazole to generate adenosylcobalamin (Ado-cobalamin). Also synthesizes adenosylcobalamin 5'-phosphate from adenosylcobinamide-GDP and alpha-ribazole 5'-phosphate.</text>
</comment>
<comment type="catalytic activity">
    <reaction evidence="1">
        <text>alpha-ribazole + adenosylcob(III)inamide-GDP = adenosylcob(III)alamin + GMP + H(+)</text>
        <dbReference type="Rhea" id="RHEA:16049"/>
        <dbReference type="ChEBI" id="CHEBI:10329"/>
        <dbReference type="ChEBI" id="CHEBI:15378"/>
        <dbReference type="ChEBI" id="CHEBI:18408"/>
        <dbReference type="ChEBI" id="CHEBI:58115"/>
        <dbReference type="ChEBI" id="CHEBI:60487"/>
        <dbReference type="EC" id="2.7.8.26"/>
    </reaction>
</comment>
<comment type="catalytic activity">
    <reaction evidence="1">
        <text>alpha-ribazole 5'-phosphate + adenosylcob(III)inamide-GDP = adenosylcob(III)alamin 5'-phosphate + GMP + H(+)</text>
        <dbReference type="Rhea" id="RHEA:23560"/>
        <dbReference type="ChEBI" id="CHEBI:15378"/>
        <dbReference type="ChEBI" id="CHEBI:57918"/>
        <dbReference type="ChEBI" id="CHEBI:58115"/>
        <dbReference type="ChEBI" id="CHEBI:60487"/>
        <dbReference type="ChEBI" id="CHEBI:60493"/>
        <dbReference type="EC" id="2.7.8.26"/>
    </reaction>
</comment>
<comment type="cofactor">
    <cofactor evidence="1">
        <name>Mg(2+)</name>
        <dbReference type="ChEBI" id="CHEBI:18420"/>
    </cofactor>
</comment>
<comment type="pathway">
    <text evidence="1">Cofactor biosynthesis; adenosylcobalamin biosynthesis; adenosylcobalamin from cob(II)yrinate a,c-diamide: step 7/7.</text>
</comment>
<comment type="subcellular location">
    <subcellularLocation>
        <location evidence="1">Cell inner membrane</location>
        <topology evidence="1">Multi-pass membrane protein</topology>
    </subcellularLocation>
</comment>
<comment type="similarity">
    <text evidence="1">Belongs to the CobS family.</text>
</comment>
<accession>B6I829</accession>
<evidence type="ECO:0000255" key="1">
    <source>
        <dbReference type="HAMAP-Rule" id="MF_00719"/>
    </source>
</evidence>
<feature type="chain" id="PRO_1000132580" description="Adenosylcobinamide-GDP ribazoletransferase">
    <location>
        <begin position="1"/>
        <end position="247"/>
    </location>
</feature>
<feature type="transmembrane region" description="Helical" evidence="1">
    <location>
        <begin position="34"/>
        <end position="54"/>
    </location>
</feature>
<feature type="transmembrane region" description="Helical" evidence="1">
    <location>
        <begin position="59"/>
        <end position="79"/>
    </location>
</feature>
<feature type="transmembrane region" description="Helical" evidence="1">
    <location>
        <begin position="113"/>
        <end position="133"/>
    </location>
</feature>
<feature type="transmembrane region" description="Helical" evidence="1">
    <location>
        <begin position="138"/>
        <end position="158"/>
    </location>
</feature>
<feature type="transmembrane region" description="Helical" evidence="1">
    <location>
        <begin position="194"/>
        <end position="214"/>
    </location>
</feature>
<reference key="1">
    <citation type="journal article" date="2008" name="DNA Res.">
        <title>Complete genome sequence and comparative analysis of the wild-type commensal Escherichia coli strain SE11 isolated from a healthy adult.</title>
        <authorList>
            <person name="Oshima K."/>
            <person name="Toh H."/>
            <person name="Ogura Y."/>
            <person name="Sasamoto H."/>
            <person name="Morita H."/>
            <person name="Park S.-H."/>
            <person name="Ooka T."/>
            <person name="Iyoda S."/>
            <person name="Taylor T.D."/>
            <person name="Hayashi T."/>
            <person name="Itoh K."/>
            <person name="Hattori M."/>
        </authorList>
    </citation>
    <scope>NUCLEOTIDE SEQUENCE [LARGE SCALE GENOMIC DNA]</scope>
    <source>
        <strain>SE11</strain>
    </source>
</reference>
<dbReference type="EC" id="2.7.8.26" evidence="1"/>
<dbReference type="EMBL" id="AP009240">
    <property type="protein sequence ID" value="BAG77800.1"/>
    <property type="molecule type" value="Genomic_DNA"/>
</dbReference>
<dbReference type="RefSeq" id="WP_001297350.1">
    <property type="nucleotide sequence ID" value="NC_011415.1"/>
</dbReference>
<dbReference type="GeneID" id="93775192"/>
<dbReference type="KEGG" id="ecy:ECSE_2276"/>
<dbReference type="HOGENOM" id="CLU_057426_1_1_6"/>
<dbReference type="UniPathway" id="UPA00148">
    <property type="reaction ID" value="UER00238"/>
</dbReference>
<dbReference type="Proteomes" id="UP000008199">
    <property type="component" value="Chromosome"/>
</dbReference>
<dbReference type="GO" id="GO:0005886">
    <property type="term" value="C:plasma membrane"/>
    <property type="evidence" value="ECO:0007669"/>
    <property type="project" value="UniProtKB-SubCell"/>
</dbReference>
<dbReference type="GO" id="GO:0051073">
    <property type="term" value="F:adenosylcobinamide-GDP ribazoletransferase activity"/>
    <property type="evidence" value="ECO:0007669"/>
    <property type="project" value="UniProtKB-UniRule"/>
</dbReference>
<dbReference type="GO" id="GO:0008818">
    <property type="term" value="F:cobalamin 5'-phosphate synthase activity"/>
    <property type="evidence" value="ECO:0007669"/>
    <property type="project" value="UniProtKB-UniRule"/>
</dbReference>
<dbReference type="GO" id="GO:0009236">
    <property type="term" value="P:cobalamin biosynthetic process"/>
    <property type="evidence" value="ECO:0007669"/>
    <property type="project" value="UniProtKB-UniRule"/>
</dbReference>
<dbReference type="HAMAP" id="MF_00719">
    <property type="entry name" value="CobS"/>
    <property type="match status" value="1"/>
</dbReference>
<dbReference type="InterPro" id="IPR003805">
    <property type="entry name" value="CobS"/>
</dbReference>
<dbReference type="NCBIfam" id="TIGR00317">
    <property type="entry name" value="cobS"/>
    <property type="match status" value="1"/>
</dbReference>
<dbReference type="PANTHER" id="PTHR34148">
    <property type="entry name" value="ADENOSYLCOBINAMIDE-GDP RIBAZOLETRANSFERASE"/>
    <property type="match status" value="1"/>
</dbReference>
<dbReference type="PANTHER" id="PTHR34148:SF1">
    <property type="entry name" value="ADENOSYLCOBINAMIDE-GDP RIBAZOLETRANSFERASE"/>
    <property type="match status" value="1"/>
</dbReference>
<dbReference type="Pfam" id="PF02654">
    <property type="entry name" value="CobS"/>
    <property type="match status" value="1"/>
</dbReference>
<proteinExistence type="inferred from homology"/>
<protein>
    <recommendedName>
        <fullName evidence="1">Adenosylcobinamide-GDP ribazoletransferase</fullName>
        <ecNumber evidence="1">2.7.8.26</ecNumber>
    </recommendedName>
    <alternativeName>
        <fullName evidence="1">Cobalamin synthase</fullName>
    </alternativeName>
    <alternativeName>
        <fullName evidence="1">Cobalamin-5'-phosphate synthase</fullName>
    </alternativeName>
</protein>
<sequence length="247" mass="26396">MSKLFWAMLSFITRLPVPRRWSQGLDFEHYSRGIITFPLIGLLLGAISGLVFMVLQAWCGVPLAALFSVLVLALMTGGFHLDGLADTCDGVFSARSRDRMLEIMRDSRLGTHGGLALIFVVLAKILVLSELALRGEPILASLAAACAVSRGTAALLMYRHRYAREEGLGNVFIGKIDGRQTCVTLGLAAIFAAVLLPGMHGVAAMVVTMVAIFILGQLLKRTLGGQTGDTLGAAIELGELVFLLALL</sequence>
<organism>
    <name type="scientific">Escherichia coli (strain SE11)</name>
    <dbReference type="NCBI Taxonomy" id="409438"/>
    <lineage>
        <taxon>Bacteria</taxon>
        <taxon>Pseudomonadati</taxon>
        <taxon>Pseudomonadota</taxon>
        <taxon>Gammaproteobacteria</taxon>
        <taxon>Enterobacterales</taxon>
        <taxon>Enterobacteriaceae</taxon>
        <taxon>Escherichia</taxon>
    </lineage>
</organism>